<evidence type="ECO:0000255" key="1">
    <source>
        <dbReference type="HAMAP-Rule" id="MF_00524"/>
    </source>
</evidence>
<proteinExistence type="inferred from homology"/>
<keyword id="KW-0067">ATP-binding</keyword>
<keyword id="KW-0963">Cytoplasm</keyword>
<keyword id="KW-0324">Glycolysis</keyword>
<keyword id="KW-0418">Kinase</keyword>
<keyword id="KW-0547">Nucleotide-binding</keyword>
<keyword id="KW-0808">Transferase</keyword>
<organism>
    <name type="scientific">Pseudomonas paraeruginosa (strain DSM 24068 / PA7)</name>
    <name type="common">Pseudomonas aeruginosa (strain PA7)</name>
    <dbReference type="NCBI Taxonomy" id="381754"/>
    <lineage>
        <taxon>Bacteria</taxon>
        <taxon>Pseudomonadati</taxon>
        <taxon>Pseudomonadota</taxon>
        <taxon>Gammaproteobacteria</taxon>
        <taxon>Pseudomonadales</taxon>
        <taxon>Pseudomonadaceae</taxon>
        <taxon>Pseudomonas</taxon>
        <taxon>Pseudomonas paraeruginosa</taxon>
    </lineage>
</organism>
<reference key="1">
    <citation type="submission" date="2007-06" db="EMBL/GenBank/DDBJ databases">
        <authorList>
            <person name="Dodson R.J."/>
            <person name="Harkins D."/>
            <person name="Paulsen I.T."/>
        </authorList>
    </citation>
    <scope>NUCLEOTIDE SEQUENCE [LARGE SCALE GENOMIC DNA]</scope>
    <source>
        <strain>DSM 24068 / PA7</strain>
    </source>
</reference>
<gene>
    <name evidence="1" type="primary">glk</name>
    <name type="ordered locus">PSPA7_1935</name>
</gene>
<accession>A6V2N1</accession>
<feature type="chain" id="PRO_1000050973" description="Glucokinase">
    <location>
        <begin position="1"/>
        <end position="339"/>
    </location>
</feature>
<feature type="binding site" evidence="1">
    <location>
        <begin position="16"/>
        <end position="21"/>
    </location>
    <ligand>
        <name>ATP</name>
        <dbReference type="ChEBI" id="CHEBI:30616"/>
    </ligand>
</feature>
<protein>
    <recommendedName>
        <fullName evidence="1">Glucokinase</fullName>
        <ecNumber evidence="1">2.7.1.2</ecNumber>
    </recommendedName>
    <alternativeName>
        <fullName evidence="1">Glucose kinase</fullName>
    </alternativeName>
</protein>
<comment type="catalytic activity">
    <reaction evidence="1">
        <text>D-glucose + ATP = D-glucose 6-phosphate + ADP + H(+)</text>
        <dbReference type="Rhea" id="RHEA:17825"/>
        <dbReference type="ChEBI" id="CHEBI:4167"/>
        <dbReference type="ChEBI" id="CHEBI:15378"/>
        <dbReference type="ChEBI" id="CHEBI:30616"/>
        <dbReference type="ChEBI" id="CHEBI:61548"/>
        <dbReference type="ChEBI" id="CHEBI:456216"/>
        <dbReference type="EC" id="2.7.1.2"/>
    </reaction>
</comment>
<comment type="subcellular location">
    <subcellularLocation>
        <location evidence="1">Cytoplasm</location>
    </subcellularLocation>
</comment>
<comment type="similarity">
    <text evidence="1">Belongs to the bacterial glucokinase family.</text>
</comment>
<sequence length="339" mass="35506">MNNDKNGSSGGLALIGDIGGTNARFALWRGQRLESIAVLACADYPRPELAVRDYLARVGESLANIDSVCLACAGPVGAGDFRFTNNHWSINRAAFREELGLDHLLLVNDFSTMAWAASRLGADELVQVRPGSAQADRARLIIGPGTGLGVGSLLPLGEGRWEVLPCEGGHVDLPVTSARDFAVWESLRERYGHVSAERVLSGNGLLALYEISCALDGIPVRATSAAEVGALALAGDAQADAVLEHFFLWLARVAGNAALTVGALGGVYITGGIVPRFRERFLASGFAGAFASRGKTSGAYLQDVPVWIMTAEHPGLLGAGVALQQALDAESRTGVRATA</sequence>
<dbReference type="EC" id="2.7.1.2" evidence="1"/>
<dbReference type="EMBL" id="CP000744">
    <property type="protein sequence ID" value="ABR83238.1"/>
    <property type="molecule type" value="Genomic_DNA"/>
</dbReference>
<dbReference type="RefSeq" id="WP_012075001.1">
    <property type="nucleotide sequence ID" value="NC_009656.1"/>
</dbReference>
<dbReference type="SMR" id="A6V2N1"/>
<dbReference type="KEGG" id="pap:PSPA7_1935"/>
<dbReference type="HOGENOM" id="CLU_042582_1_0_6"/>
<dbReference type="Proteomes" id="UP000001582">
    <property type="component" value="Chromosome"/>
</dbReference>
<dbReference type="GO" id="GO:0005829">
    <property type="term" value="C:cytosol"/>
    <property type="evidence" value="ECO:0007669"/>
    <property type="project" value="TreeGrafter"/>
</dbReference>
<dbReference type="GO" id="GO:0005524">
    <property type="term" value="F:ATP binding"/>
    <property type="evidence" value="ECO:0007669"/>
    <property type="project" value="UniProtKB-UniRule"/>
</dbReference>
<dbReference type="GO" id="GO:0005536">
    <property type="term" value="F:D-glucose binding"/>
    <property type="evidence" value="ECO:0007669"/>
    <property type="project" value="InterPro"/>
</dbReference>
<dbReference type="GO" id="GO:0004340">
    <property type="term" value="F:glucokinase activity"/>
    <property type="evidence" value="ECO:0007669"/>
    <property type="project" value="UniProtKB-UniRule"/>
</dbReference>
<dbReference type="GO" id="GO:0006096">
    <property type="term" value="P:glycolytic process"/>
    <property type="evidence" value="ECO:0007669"/>
    <property type="project" value="UniProtKB-UniRule"/>
</dbReference>
<dbReference type="CDD" id="cd24008">
    <property type="entry name" value="ASKHA_NBD_GLK"/>
    <property type="match status" value="1"/>
</dbReference>
<dbReference type="Gene3D" id="3.30.420.40">
    <property type="match status" value="1"/>
</dbReference>
<dbReference type="Gene3D" id="3.40.367.20">
    <property type="match status" value="1"/>
</dbReference>
<dbReference type="HAMAP" id="MF_00524">
    <property type="entry name" value="Glucokinase"/>
    <property type="match status" value="1"/>
</dbReference>
<dbReference type="InterPro" id="IPR043129">
    <property type="entry name" value="ATPase_NBD"/>
</dbReference>
<dbReference type="InterPro" id="IPR050201">
    <property type="entry name" value="Bacterial_glucokinase"/>
</dbReference>
<dbReference type="InterPro" id="IPR003836">
    <property type="entry name" value="Glucokinase"/>
</dbReference>
<dbReference type="NCBIfam" id="TIGR00749">
    <property type="entry name" value="glk"/>
    <property type="match status" value="1"/>
</dbReference>
<dbReference type="NCBIfam" id="NF001415">
    <property type="entry name" value="PRK00292.1-2"/>
    <property type="match status" value="1"/>
</dbReference>
<dbReference type="PANTHER" id="PTHR47690">
    <property type="entry name" value="GLUCOKINASE"/>
    <property type="match status" value="1"/>
</dbReference>
<dbReference type="PANTHER" id="PTHR47690:SF1">
    <property type="entry name" value="GLUCOKINASE"/>
    <property type="match status" value="1"/>
</dbReference>
<dbReference type="Pfam" id="PF02685">
    <property type="entry name" value="Glucokinase"/>
    <property type="match status" value="1"/>
</dbReference>
<dbReference type="SUPFAM" id="SSF53067">
    <property type="entry name" value="Actin-like ATPase domain"/>
    <property type="match status" value="1"/>
</dbReference>
<name>GLK_PSEP7</name>